<evidence type="ECO:0000250" key="1">
    <source>
        <dbReference type="UniProtKB" id="Q8BWF2"/>
    </source>
</evidence>
<evidence type="ECO:0000250" key="2">
    <source>
        <dbReference type="UniProtKB" id="Q8K3L6"/>
    </source>
</evidence>
<evidence type="ECO:0000250" key="3">
    <source>
        <dbReference type="UniProtKB" id="Q8WWP7"/>
    </source>
</evidence>
<evidence type="ECO:0000250" key="4">
    <source>
        <dbReference type="UniProtKB" id="Q9UG22"/>
    </source>
</evidence>
<evidence type="ECO:0000255" key="5"/>
<evidence type="ECO:0000255" key="6">
    <source>
        <dbReference type="PROSITE-ProRule" id="PRU01057"/>
    </source>
</evidence>
<evidence type="ECO:0000256" key="7">
    <source>
        <dbReference type="SAM" id="MobiDB-lite"/>
    </source>
</evidence>
<evidence type="ECO:0000269" key="8">
    <source>
    </source>
</evidence>
<evidence type="ECO:0000269" key="9">
    <source>
    </source>
</evidence>
<evidence type="ECO:0000269" key="10">
    <source>
    </source>
</evidence>
<evidence type="ECO:0000269" key="11">
    <source>
    </source>
</evidence>
<evidence type="ECO:0000269" key="12">
    <source>
    </source>
</evidence>
<evidence type="ECO:0000303" key="13">
    <source>
    </source>
</evidence>
<evidence type="ECO:0000303" key="14">
    <source>
    </source>
</evidence>
<evidence type="ECO:0000305" key="15"/>
<evidence type="ECO:0000305" key="16">
    <source>
    </source>
</evidence>
<evidence type="ECO:0000305" key="17">
    <source>
    </source>
</evidence>
<evidence type="ECO:0007829" key="18">
    <source>
        <dbReference type="PDB" id="6Z3E"/>
    </source>
</evidence>
<reference key="1">
    <citation type="journal article" date="2004" name="Genes Immun.">
        <title>hIan5: the human ortholog to the rat Ian4/Iddm1/lyp is a new member of the Ian family that is overexpressed in B-cell lymphoid malignancies.</title>
        <authorList>
            <person name="Zenz T."/>
            <person name="Roessner A."/>
            <person name="Thomas A."/>
            <person name="Froehling S."/>
            <person name="Doehner H."/>
            <person name="Calabretta B."/>
            <person name="Daheron L."/>
        </authorList>
    </citation>
    <scope>NUCLEOTIDE SEQUENCE [MRNA] (ISOFORM 1)</scope>
    <scope>SUBCELLULAR LOCATION</scope>
    <scope>TISSUE SPECIFICITY</scope>
    <source>
        <tissue>Histiocytic lymphoma</tissue>
    </source>
</reference>
<reference key="2">
    <citation type="journal article" date="2004" name="Nat. Genet.">
        <title>Complete sequencing and characterization of 21,243 full-length human cDNAs.</title>
        <authorList>
            <person name="Ota T."/>
            <person name="Suzuki Y."/>
            <person name="Nishikawa T."/>
            <person name="Otsuki T."/>
            <person name="Sugiyama T."/>
            <person name="Irie R."/>
            <person name="Wakamatsu A."/>
            <person name="Hayashi K."/>
            <person name="Sato H."/>
            <person name="Nagai K."/>
            <person name="Kimura K."/>
            <person name="Makita H."/>
            <person name="Sekine M."/>
            <person name="Obayashi M."/>
            <person name="Nishi T."/>
            <person name="Shibahara T."/>
            <person name="Tanaka T."/>
            <person name="Ishii S."/>
            <person name="Yamamoto J."/>
            <person name="Saito K."/>
            <person name="Kawai Y."/>
            <person name="Isono Y."/>
            <person name="Nakamura Y."/>
            <person name="Nagahari K."/>
            <person name="Murakami K."/>
            <person name="Yasuda T."/>
            <person name="Iwayanagi T."/>
            <person name="Wagatsuma M."/>
            <person name="Shiratori A."/>
            <person name="Sudo H."/>
            <person name="Hosoiri T."/>
            <person name="Kaku Y."/>
            <person name="Kodaira H."/>
            <person name="Kondo H."/>
            <person name="Sugawara M."/>
            <person name="Takahashi M."/>
            <person name="Kanda K."/>
            <person name="Yokoi T."/>
            <person name="Furuya T."/>
            <person name="Kikkawa E."/>
            <person name="Omura Y."/>
            <person name="Abe K."/>
            <person name="Kamihara K."/>
            <person name="Katsuta N."/>
            <person name="Sato K."/>
            <person name="Tanikawa M."/>
            <person name="Yamazaki M."/>
            <person name="Ninomiya K."/>
            <person name="Ishibashi T."/>
            <person name="Yamashita H."/>
            <person name="Murakawa K."/>
            <person name="Fujimori K."/>
            <person name="Tanai H."/>
            <person name="Kimata M."/>
            <person name="Watanabe M."/>
            <person name="Hiraoka S."/>
            <person name="Chiba Y."/>
            <person name="Ishida S."/>
            <person name="Ono Y."/>
            <person name="Takiguchi S."/>
            <person name="Watanabe S."/>
            <person name="Yosida M."/>
            <person name="Hotuta T."/>
            <person name="Kusano J."/>
            <person name="Kanehori K."/>
            <person name="Takahashi-Fujii A."/>
            <person name="Hara H."/>
            <person name="Tanase T.-O."/>
            <person name="Nomura Y."/>
            <person name="Togiya S."/>
            <person name="Komai F."/>
            <person name="Hara R."/>
            <person name="Takeuchi K."/>
            <person name="Arita M."/>
            <person name="Imose N."/>
            <person name="Musashino K."/>
            <person name="Yuuki H."/>
            <person name="Oshima A."/>
            <person name="Sasaki N."/>
            <person name="Aotsuka S."/>
            <person name="Yoshikawa Y."/>
            <person name="Matsunawa H."/>
            <person name="Ichihara T."/>
            <person name="Shiohata N."/>
            <person name="Sano S."/>
            <person name="Moriya S."/>
            <person name="Momiyama H."/>
            <person name="Satoh N."/>
            <person name="Takami S."/>
            <person name="Terashima Y."/>
            <person name="Suzuki O."/>
            <person name="Nakagawa S."/>
            <person name="Senoh A."/>
            <person name="Mizoguchi H."/>
            <person name="Goto Y."/>
            <person name="Shimizu F."/>
            <person name="Wakebe H."/>
            <person name="Hishigaki H."/>
            <person name="Watanabe T."/>
            <person name="Sugiyama A."/>
            <person name="Takemoto M."/>
            <person name="Kawakami B."/>
            <person name="Yamazaki M."/>
            <person name="Watanabe K."/>
            <person name="Kumagai A."/>
            <person name="Itakura S."/>
            <person name="Fukuzumi Y."/>
            <person name="Fujimori Y."/>
            <person name="Komiyama M."/>
            <person name="Tashiro H."/>
            <person name="Tanigami A."/>
            <person name="Fujiwara T."/>
            <person name="Ono T."/>
            <person name="Yamada K."/>
            <person name="Fujii Y."/>
            <person name="Ozaki K."/>
            <person name="Hirao M."/>
            <person name="Ohmori Y."/>
            <person name="Kawabata A."/>
            <person name="Hikiji T."/>
            <person name="Kobatake N."/>
            <person name="Inagaki H."/>
            <person name="Ikema Y."/>
            <person name="Okamoto S."/>
            <person name="Okitani R."/>
            <person name="Kawakami T."/>
            <person name="Noguchi S."/>
            <person name="Itoh T."/>
            <person name="Shigeta K."/>
            <person name="Senba T."/>
            <person name="Matsumura K."/>
            <person name="Nakajima Y."/>
            <person name="Mizuno T."/>
            <person name="Morinaga M."/>
            <person name="Sasaki M."/>
            <person name="Togashi T."/>
            <person name="Oyama M."/>
            <person name="Hata H."/>
            <person name="Watanabe M."/>
            <person name="Komatsu T."/>
            <person name="Mizushima-Sugano J."/>
            <person name="Satoh T."/>
            <person name="Shirai Y."/>
            <person name="Takahashi Y."/>
            <person name="Nakagawa K."/>
            <person name="Okumura K."/>
            <person name="Nagase T."/>
            <person name="Nomura N."/>
            <person name="Kikuchi H."/>
            <person name="Masuho Y."/>
            <person name="Yamashita R."/>
            <person name="Nakai K."/>
            <person name="Yada T."/>
            <person name="Nakamura Y."/>
            <person name="Ohara O."/>
            <person name="Isogai T."/>
            <person name="Sugano S."/>
        </authorList>
    </citation>
    <scope>NUCLEOTIDE SEQUENCE [LARGE SCALE MRNA] (ISOFORMS 1 AND 2)</scope>
    <source>
        <tissue>Lung</tissue>
        <tissue>Placenta</tissue>
    </source>
</reference>
<reference key="3">
    <citation type="submission" date="2004-06" db="EMBL/GenBank/DDBJ databases">
        <title>Cloning of human full open reading frames in Gateway(TM) system entry vector (pDONR201).</title>
        <authorList>
            <person name="Ebert L."/>
            <person name="Schick M."/>
            <person name="Neubert P."/>
            <person name="Schatten R."/>
            <person name="Henze S."/>
            <person name="Korn B."/>
        </authorList>
    </citation>
    <scope>NUCLEOTIDE SEQUENCE [LARGE SCALE MRNA] (ISOFORM 1)</scope>
</reference>
<reference key="4">
    <citation type="submission" date="2005-09" db="EMBL/GenBank/DDBJ databases">
        <authorList>
            <person name="Mural R.J."/>
            <person name="Istrail S."/>
            <person name="Sutton G.G."/>
            <person name="Florea L."/>
            <person name="Halpern A.L."/>
            <person name="Mobarry C.M."/>
            <person name="Lippert R."/>
            <person name="Walenz B."/>
            <person name="Shatkay H."/>
            <person name="Dew I."/>
            <person name="Miller J.R."/>
            <person name="Flanigan M.J."/>
            <person name="Edwards N.J."/>
            <person name="Bolanos R."/>
            <person name="Fasulo D."/>
            <person name="Halldorsson B.V."/>
            <person name="Hannenhalli S."/>
            <person name="Turner R."/>
            <person name="Yooseph S."/>
            <person name="Lu F."/>
            <person name="Nusskern D.R."/>
            <person name="Shue B.C."/>
            <person name="Zheng X.H."/>
            <person name="Zhong F."/>
            <person name="Delcher A.L."/>
            <person name="Huson D.H."/>
            <person name="Kravitz S.A."/>
            <person name="Mouchard L."/>
            <person name="Reinert K."/>
            <person name="Remington K.A."/>
            <person name="Clark A.G."/>
            <person name="Waterman M.S."/>
            <person name="Eichler E.E."/>
            <person name="Adams M.D."/>
            <person name="Hunkapiller M.W."/>
            <person name="Myers E.W."/>
            <person name="Venter J.C."/>
        </authorList>
    </citation>
    <scope>NUCLEOTIDE SEQUENCE [LARGE SCALE GENOMIC DNA]</scope>
</reference>
<reference key="5">
    <citation type="journal article" date="2004" name="Genome Res.">
        <title>The status, quality, and expansion of the NIH full-length cDNA project: the Mammalian Gene Collection (MGC).</title>
        <authorList>
            <consortium name="The MGC Project Team"/>
        </authorList>
    </citation>
    <scope>NUCLEOTIDE SEQUENCE [LARGE SCALE MRNA] (ISOFORM 1)</scope>
    <source>
        <tissue>B-cell</tissue>
    </source>
</reference>
<reference key="6">
    <citation type="journal article" date="2006" name="PLoS Biol.">
        <title>IAN family critically regulates survival and development of T lymphocytes.</title>
        <authorList>
            <person name="Nitta T."/>
            <person name="Nasreen M."/>
            <person name="Seike T."/>
            <person name="Goji A."/>
            <person name="Ohigashi I."/>
            <person name="Miyazaki T."/>
            <person name="Ohta T."/>
            <person name="Kanno M."/>
            <person name="Takahama Y."/>
        </authorList>
    </citation>
    <scope>INTERACTION WITH BAD; BAK1; BAX; BCL2L1 AND BCL2L11</scope>
</reference>
<reference key="7">
    <citation type="journal article" date="2010" name="Self/Nonself">
        <title>The autoimmunity-related GIMAP5 GTPase is a lysosome-associated protein.</title>
        <authorList>
            <person name="Wong V.W."/>
            <person name="Saunders A.E."/>
            <person name="Hutchings A."/>
            <person name="Pascall J.C."/>
            <person name="Carter C."/>
            <person name="Bright N.A."/>
            <person name="Walker S.A."/>
            <person name="Ktistakis N.T."/>
            <person name="Butcher G.W."/>
        </authorList>
    </citation>
    <scope>SUBCELLULAR LOCATION</scope>
</reference>
<reference key="8">
    <citation type="journal article" date="2018" name="Nat. Commun.">
        <title>Gimap5-dependent inactivation of GSK3beta is required for CD4+ T cell homeostasis and prevention of immune pathology.</title>
        <authorList>
            <person name="Patterson A.R."/>
            <person name="Endale M."/>
            <person name="Lampe K."/>
            <person name="Aksoylar H.I."/>
            <person name="Flagg A."/>
            <person name="Woodgett J.R."/>
            <person name="Hildeman D."/>
            <person name="Jordan M.B."/>
            <person name="Singh H."/>
            <person name="Kucuk Z."/>
            <person name="Bleesing J."/>
            <person name="Hoebe K."/>
        </authorList>
    </citation>
    <scope>FUNCTION</scope>
    <scope>SUBCELLULAR LOCATION</scope>
    <scope>TISSUE SPECIFICITY</scope>
    <scope>VARIANT PRO-204</scope>
    <scope>CHARACTERIZATION OF VARIANT PRO-204</scope>
</reference>
<reference key="9">
    <citation type="journal article" date="2021" name="J. Exp. Med.">
        <title>GIMAP5 maintains liver endothelial cell homeostasis and prevents portal hypertension.</title>
        <authorList>
            <person name="Drzewiecki K."/>
            <person name="Choi J."/>
            <person name="Brancale J."/>
            <person name="Leney-Greene M.A."/>
            <person name="Sari S."/>
            <person name="Dalgic B."/>
            <person name="Uenluesoy Aksu A."/>
            <person name="Evirgen Sahin G."/>
            <person name="Ozen A."/>
            <person name="Baris S."/>
            <person name="Karakoc-Aydiner E."/>
            <person name="Jain D."/>
            <person name="Kleiner D."/>
            <person name="Schmalz M."/>
            <person name="Radhakrishnan K."/>
            <person name="Zhang J."/>
            <person name="Hoebe K."/>
            <person name="Su H.C."/>
            <person name="Pereira J.P."/>
            <person name="Lenardo M.J."/>
            <person name="Lifton R.P."/>
            <person name="Vilarinho S."/>
        </authorList>
    </citation>
    <scope>VARIANTS NCPH2 THR-47; LEU-109; PRO-204 AND PHE-223</scope>
    <scope>INVOLVEMENT IN NCPH2</scope>
</reference>
<feature type="chain" id="PRO_0000190990" description="GTPase IMAP family member 5">
    <location>
        <begin position="1"/>
        <end position="307"/>
    </location>
</feature>
<feature type="topological domain" description="Cytoplasmic" evidence="5">
    <location>
        <begin position="1"/>
        <end position="284"/>
    </location>
</feature>
<feature type="transmembrane region" description="Helical; Anchor for type IV membrane protein" evidence="5">
    <location>
        <begin position="285"/>
        <end position="305"/>
    </location>
</feature>
<feature type="topological domain" description="Lumenal" evidence="5">
    <location>
        <begin position="306"/>
        <end position="307"/>
    </location>
</feature>
<feature type="domain" description="AIG1-type G" evidence="6">
    <location>
        <begin position="25"/>
        <end position="228"/>
    </location>
</feature>
<feature type="region of interest" description="Disordered" evidence="7">
    <location>
        <begin position="1"/>
        <end position="21"/>
    </location>
</feature>
<feature type="binding site" evidence="3">
    <location>
        <begin position="34"/>
        <end position="42"/>
    </location>
    <ligand>
        <name>GTP</name>
        <dbReference type="ChEBI" id="CHEBI:37565"/>
    </ligand>
</feature>
<feature type="binding site" evidence="4">
    <location>
        <position position="55"/>
    </location>
    <ligand>
        <name>GTP</name>
        <dbReference type="ChEBI" id="CHEBI:37565"/>
    </ligand>
</feature>
<feature type="binding site" evidence="3">
    <location>
        <begin position="152"/>
        <end position="154"/>
    </location>
    <ligand>
        <name>GTP</name>
        <dbReference type="ChEBI" id="CHEBI:37565"/>
    </ligand>
</feature>
<feature type="binding site" evidence="3">
    <location>
        <position position="189"/>
    </location>
    <ligand>
        <name>GTP</name>
        <dbReference type="ChEBI" id="CHEBI:37565"/>
    </ligand>
</feature>
<feature type="splice variant" id="VSP_008961" description="In isoform 2." evidence="13">
    <original>MGGFQRGKYGTMAE</original>
    <variation>MQDSPIVVCTLLCTHKYVYHSGEDVHSFHEITMNNDLTVLRIINLVRYKTSFST</variation>
    <location>
        <begin position="1"/>
        <end position="14"/>
    </location>
</feature>
<feature type="sequence variant" id="VAR_086141" description="In NCPH2; uncertain significance." evidence="12">
    <original>I</original>
    <variation>T</variation>
    <location>
        <position position="47"/>
    </location>
</feature>
<feature type="sequence variant" id="VAR_086142" description="In NCPH2; uncertain significance." evidence="12">
    <original>P</original>
    <variation>L</variation>
    <location>
        <position position="109"/>
    </location>
</feature>
<feature type="sequence variant" id="VAR_081683" description="In NCPH2; uncertain significance; strong decrease in protein level; dbSNP:rs72650695." evidence="11 12">
    <original>L</original>
    <variation>P</variation>
    <location>
        <position position="204"/>
    </location>
</feature>
<feature type="sequence variant" id="VAR_086143" description="In NCPH2; uncertain significance." evidence="12">
    <original>L</original>
    <variation>F</variation>
    <location>
        <position position="223"/>
    </location>
</feature>
<feature type="sequence conflict" description="In Ref. 2; BAA92115." evidence="15" ref="2">
    <original>K</original>
    <variation>E</variation>
    <location>
        <position position="174"/>
    </location>
</feature>
<feature type="strand" evidence="18">
    <location>
        <begin position="28"/>
        <end position="34"/>
    </location>
</feature>
<feature type="helix" evidence="18">
    <location>
        <begin position="40"/>
        <end position="48"/>
    </location>
</feature>
<feature type="strand" evidence="18">
    <location>
        <begin position="57"/>
        <end position="59"/>
    </location>
</feature>
<feature type="strand" evidence="18">
    <location>
        <begin position="67"/>
        <end position="73"/>
    </location>
</feature>
<feature type="strand" evidence="18">
    <location>
        <begin position="76"/>
        <end position="82"/>
    </location>
</feature>
<feature type="strand" evidence="18">
    <location>
        <begin position="87"/>
        <end position="89"/>
    </location>
</feature>
<feature type="helix" evidence="18">
    <location>
        <begin position="94"/>
        <end position="107"/>
    </location>
</feature>
<feature type="strand" evidence="18">
    <location>
        <begin position="112"/>
        <end position="119"/>
    </location>
</feature>
<feature type="helix" evidence="18">
    <location>
        <begin position="125"/>
        <end position="138"/>
    </location>
</feature>
<feature type="helix" evidence="18">
    <location>
        <begin position="142"/>
        <end position="145"/>
    </location>
</feature>
<feature type="strand" evidence="18">
    <location>
        <begin position="146"/>
        <end position="151"/>
    </location>
</feature>
<feature type="helix" evidence="18">
    <location>
        <begin position="153"/>
        <end position="156"/>
    </location>
</feature>
<feature type="helix" evidence="18">
    <location>
        <begin position="161"/>
        <end position="167"/>
    </location>
</feature>
<feature type="helix" evidence="18">
    <location>
        <begin position="171"/>
        <end position="179"/>
    </location>
</feature>
<feature type="turn" evidence="18">
    <location>
        <begin position="180"/>
        <end position="182"/>
    </location>
</feature>
<feature type="strand" evidence="18">
    <location>
        <begin position="184"/>
        <end position="186"/>
    </location>
</feature>
<feature type="helix" evidence="18">
    <location>
        <begin position="193"/>
        <end position="213"/>
    </location>
</feature>
<feature type="turn" evidence="18">
    <location>
        <begin position="214"/>
        <end position="216"/>
    </location>
</feature>
<feature type="helix" evidence="18">
    <location>
        <begin position="222"/>
        <end position="231"/>
    </location>
</feature>
<feature type="helix" evidence="18">
    <location>
        <begin position="242"/>
        <end position="261"/>
    </location>
</feature>
<gene>
    <name type="primary">GIMAP5</name>
    <name type="synonym">IAN4L1</name>
    <name type="synonym">IAN5</name>
    <name type="synonym">IMAP3</name>
</gene>
<name>GIMA5_HUMAN</name>
<sequence>MGGFQRGKYGTMAEGRSEDNLSATPPALRIILVGKTGCGKSATGNSILGQPVFESKLRAQSVTRTCQVKTGTWNGRKVLVVDTPSIFESQADTQELYKNIGDCYLLSAPGPHVLLLVIQLGRFTAQDTVAIRKVKEVFGTGAMRHVVILFTHKEDLGGQALDDYVANTDNCSLKDLVRECERRYCAFNNWGSVEEQRQQQAELLAVIERLGREREGSFHSNDLFLDAQLLQRTGAGACQEDYRQYQAKVEWQVEKHKQELRENESNWAYKALLRVKHLMLLHYEIFVFLLLCSILFFIIFLFIFHYI</sequence>
<dbReference type="EMBL" id="AK002158">
    <property type="protein sequence ID" value="BAA92115.1"/>
    <property type="molecule type" value="mRNA"/>
</dbReference>
<dbReference type="EMBL" id="AK055568">
    <property type="protein sequence ID" value="BAB70958.1"/>
    <property type="molecule type" value="mRNA"/>
</dbReference>
<dbReference type="EMBL" id="CR457280">
    <property type="protein sequence ID" value="CAG33561.1"/>
    <property type="molecule type" value="mRNA"/>
</dbReference>
<dbReference type="EMBL" id="CH471173">
    <property type="protein sequence ID" value="EAW54092.1"/>
    <property type="molecule type" value="Genomic_DNA"/>
</dbReference>
<dbReference type="EMBL" id="CH471173">
    <property type="protein sequence ID" value="EAW54093.1"/>
    <property type="molecule type" value="Genomic_DNA"/>
</dbReference>
<dbReference type="EMBL" id="CH471173">
    <property type="protein sequence ID" value="EAW54094.1"/>
    <property type="molecule type" value="Genomic_DNA"/>
</dbReference>
<dbReference type="EMBL" id="BC011732">
    <property type="protein sequence ID" value="AAH11732.1"/>
    <property type="molecule type" value="mRNA"/>
</dbReference>
<dbReference type="CCDS" id="CCDS5907.1">
    <molecule id="Q96F15-1"/>
</dbReference>
<dbReference type="RefSeq" id="NP_060854.2">
    <molecule id="Q96F15-1"/>
    <property type="nucleotide sequence ID" value="NM_018384.4"/>
</dbReference>
<dbReference type="PDB" id="6Z3E">
    <property type="method" value="X-ray"/>
    <property type="resolution" value="2.80 A"/>
    <property type="chains" value="A=1-276"/>
</dbReference>
<dbReference type="PDBsum" id="6Z3E"/>
<dbReference type="SMR" id="Q96F15"/>
<dbReference type="BioGRID" id="120621">
    <property type="interactions" value="76"/>
</dbReference>
<dbReference type="DIP" id="DIP-59484N"/>
<dbReference type="FunCoup" id="Q96F15">
    <property type="interactions" value="38"/>
</dbReference>
<dbReference type="IntAct" id="Q96F15">
    <property type="interactions" value="62"/>
</dbReference>
<dbReference type="STRING" id="9606.ENSP00000351473"/>
<dbReference type="iPTMnet" id="Q96F15"/>
<dbReference type="PhosphoSitePlus" id="Q96F15"/>
<dbReference type="BioMuta" id="GIMAP5"/>
<dbReference type="DMDM" id="38372381"/>
<dbReference type="MassIVE" id="Q96F15"/>
<dbReference type="PaxDb" id="9606-ENSP00000477920"/>
<dbReference type="PeptideAtlas" id="Q96F15"/>
<dbReference type="ProteomicsDB" id="76484">
    <molecule id="Q96F15-1"/>
</dbReference>
<dbReference type="ProteomicsDB" id="76485">
    <molecule id="Q96F15-2"/>
</dbReference>
<dbReference type="Antibodypedia" id="2723">
    <property type="antibodies" value="183 antibodies from 27 providers"/>
</dbReference>
<dbReference type="DNASU" id="55340"/>
<dbReference type="Ensembl" id="ENST00000358647.5">
    <molecule id="Q96F15-1"/>
    <property type="protein sequence ID" value="ENSP00000351473.3"/>
    <property type="gene ID" value="ENSG00000196329.12"/>
</dbReference>
<dbReference type="Ensembl" id="ENST00000498181.6">
    <molecule id="Q96F15-1"/>
    <property type="protein sequence ID" value="ENSP00000487840.2"/>
    <property type="gene ID" value="ENSG00000196329.12"/>
</dbReference>
<dbReference type="GeneID" id="55340"/>
<dbReference type="KEGG" id="hsa:55340"/>
<dbReference type="MANE-Select" id="ENST00000358647.5">
    <property type="protein sequence ID" value="ENSP00000351473.3"/>
    <property type="RefSeq nucleotide sequence ID" value="NM_018384.5"/>
    <property type="RefSeq protein sequence ID" value="NP_060854.2"/>
</dbReference>
<dbReference type="UCSC" id="uc003whr.3">
    <molecule id="Q96F15-1"/>
    <property type="organism name" value="human"/>
</dbReference>
<dbReference type="AGR" id="HGNC:18005"/>
<dbReference type="CTD" id="55340"/>
<dbReference type="DisGeNET" id="55340"/>
<dbReference type="GeneCards" id="GIMAP5"/>
<dbReference type="HGNC" id="HGNC:18005">
    <property type="gene designation" value="GIMAP5"/>
</dbReference>
<dbReference type="HPA" id="ENSG00000196329">
    <property type="expression patterns" value="Tissue enhanced (lymphoid)"/>
</dbReference>
<dbReference type="MalaCards" id="GIMAP5"/>
<dbReference type="MIM" id="608086">
    <property type="type" value="gene"/>
</dbReference>
<dbReference type="MIM" id="619463">
    <property type="type" value="phenotype"/>
</dbReference>
<dbReference type="neXtProt" id="NX_Q96F15"/>
<dbReference type="OpenTargets" id="ENSG00000196329"/>
<dbReference type="PharmGKB" id="PA29578"/>
<dbReference type="VEuPathDB" id="HostDB:ENSG00000196329"/>
<dbReference type="eggNOG" id="ENOG502RB0C">
    <property type="taxonomic scope" value="Eukaryota"/>
</dbReference>
<dbReference type="GeneTree" id="ENSGT00940000154844"/>
<dbReference type="HOGENOM" id="CLU_010468_1_1_1"/>
<dbReference type="InParanoid" id="Q96F15"/>
<dbReference type="PAN-GO" id="Q96F15">
    <property type="GO annotations" value="0 GO annotations based on evolutionary models"/>
</dbReference>
<dbReference type="PhylomeDB" id="Q96F15"/>
<dbReference type="TreeFam" id="TF330845"/>
<dbReference type="PathwayCommons" id="Q96F15"/>
<dbReference type="SignaLink" id="Q96F15"/>
<dbReference type="BioGRID-ORCS" id="55340">
    <property type="hits" value="10 hits in 1143 CRISPR screens"/>
</dbReference>
<dbReference type="CD-CODE" id="8C2F96ED">
    <property type="entry name" value="Centrosome"/>
</dbReference>
<dbReference type="GeneWiki" id="GIMAP5"/>
<dbReference type="GenomeRNAi" id="55340"/>
<dbReference type="Pharos" id="Q96F15">
    <property type="development level" value="Tbio"/>
</dbReference>
<dbReference type="PRO" id="PR:Q96F15"/>
<dbReference type="Proteomes" id="UP000005640">
    <property type="component" value="Chromosome 7"/>
</dbReference>
<dbReference type="RNAct" id="Q96F15">
    <property type="molecule type" value="protein"/>
</dbReference>
<dbReference type="Bgee" id="ENSG00000196329">
    <property type="expression patterns" value="Expressed in right lung and 93 other cell types or tissues"/>
</dbReference>
<dbReference type="ExpressionAtlas" id="Q96F15">
    <property type="expression patterns" value="baseline and differential"/>
</dbReference>
<dbReference type="GO" id="GO:0005765">
    <property type="term" value="C:lysosomal membrane"/>
    <property type="evidence" value="ECO:0007669"/>
    <property type="project" value="UniProtKB-SubCell"/>
</dbReference>
<dbReference type="GO" id="GO:0032585">
    <property type="term" value="C:multivesicular body membrane"/>
    <property type="evidence" value="ECO:0007669"/>
    <property type="project" value="UniProtKB-SubCell"/>
</dbReference>
<dbReference type="GO" id="GO:0005525">
    <property type="term" value="F:GTP binding"/>
    <property type="evidence" value="ECO:0007669"/>
    <property type="project" value="UniProtKB-KW"/>
</dbReference>
<dbReference type="CDD" id="cd01852">
    <property type="entry name" value="AIG1"/>
    <property type="match status" value="1"/>
</dbReference>
<dbReference type="FunFam" id="3.40.50.300:FF:003640">
    <property type="entry name" value="GTPase, IMAP family member 1"/>
    <property type="match status" value="1"/>
</dbReference>
<dbReference type="Gene3D" id="3.40.50.300">
    <property type="entry name" value="P-loop containing nucleotide triphosphate hydrolases"/>
    <property type="match status" value="1"/>
</dbReference>
<dbReference type="InterPro" id="IPR006703">
    <property type="entry name" value="G_AIG1"/>
</dbReference>
<dbReference type="InterPro" id="IPR045058">
    <property type="entry name" value="GIMA/IAN/Toc"/>
</dbReference>
<dbReference type="InterPro" id="IPR027417">
    <property type="entry name" value="P-loop_NTPase"/>
</dbReference>
<dbReference type="PANTHER" id="PTHR10903:SF69">
    <property type="entry name" value="GTPASE IMAP FAMILY MEMBER 5"/>
    <property type="match status" value="1"/>
</dbReference>
<dbReference type="PANTHER" id="PTHR10903">
    <property type="entry name" value="GTPASE, IMAP FAMILY MEMBER-RELATED"/>
    <property type="match status" value="1"/>
</dbReference>
<dbReference type="Pfam" id="PF04548">
    <property type="entry name" value="AIG1"/>
    <property type="match status" value="1"/>
</dbReference>
<dbReference type="SUPFAM" id="SSF52540">
    <property type="entry name" value="P-loop containing nucleoside triphosphate hydrolases"/>
    <property type="match status" value="1"/>
</dbReference>
<dbReference type="PROSITE" id="PS51720">
    <property type="entry name" value="G_AIG1"/>
    <property type="match status" value="1"/>
</dbReference>
<comment type="function">
    <text evidence="1 2 11">Plays a role in T lymphocyte development and the optimal generation of CD4/CD8 double-positive thymocytes (By similarity). Inhibitor of GSK3A, possibly by sequestering GSK3A in cytoplasmic vesicles and impairing its translocation to the nucleus. Consequently, impairs GSK3A-dependent transcriptional program and regulation of the DNA damage response occurring during T cells proliferation (PubMed:29382851). Required for the survival of peripheral T cells, natural killer (NK) and NK T-cell development and the maintenance of normal liver function (By similarity). May promote the survival of mature T lymphocytes upon cytokine withdrawal (By similarity). May regulate Ca(2+) homeostasis by modulating lysosomal Ca(2+) stores, preventing its accumulation in the absence of T cell activation (By similarity). May play a role in mitochondrial DNA segregation in hematopoietic tissues (By similarity). Is a regulator of liver endothelial cell homeostasis (By similarity).</text>
</comment>
<comment type="subunit">
    <text evidence="1 2 9">Interacts with BAD, BAK1, BAX, BCL2, BCL2L1/Bcl-xL and BCL2L11/BimEL (PubMed:16509771). The interaction with BAX is increased, when cells initiate apoptosis upon IL2 withdrawal (PubMed:16509771). Also interacts with BCL2 (By similarity). Forms a complex with BCL2L1 or MCL1 and HSPA8/HSC70; the interaction between HSPA8 and BCL2L1 or MCL1 is impaired in the absence of GIMAP5 (By similarity). May interact (via N-terminus) with microtubules (By similarity).</text>
</comment>
<comment type="interaction">
    <interactant intactId="EBI-6166686">
        <id>Q96F15</id>
    </interactant>
    <interactant intactId="EBI-17979264">
        <id>Q86Y34</id>
        <label>ADGRG3</label>
    </interactant>
    <organismsDiffer>false</organismsDiffer>
    <experiments>3</experiments>
</comment>
<comment type="interaction">
    <interactant intactId="EBI-6166686">
        <id>Q96F15</id>
    </interactant>
    <interactant intactId="EBI-2808854">
        <id>Q92482</id>
        <label>AQP3</label>
    </interactant>
    <organismsDiffer>false</organismsDiffer>
    <experiments>3</experiments>
</comment>
<comment type="interaction">
    <interactant intactId="EBI-6166686">
        <id>Q96F15</id>
    </interactant>
    <interactant intactId="EBI-13059134">
        <id>Q13520</id>
        <label>AQP6</label>
    </interactant>
    <organismsDiffer>false</organismsDiffer>
    <experiments>3</experiments>
</comment>
<comment type="interaction">
    <interactant intactId="EBI-6166686">
        <id>Q96F15</id>
    </interactant>
    <interactant intactId="EBI-11343438">
        <id>Q3SXY8</id>
        <label>ARL13B</label>
    </interactant>
    <organismsDiffer>false</organismsDiffer>
    <experiments>3</experiments>
</comment>
<comment type="interaction">
    <interactant intactId="EBI-6166686">
        <id>Q96F15</id>
    </interactant>
    <interactant intactId="EBI-17953245">
        <id>Q6UXG8-3</id>
        <label>BTNL9</label>
    </interactant>
    <organismsDiffer>false</organismsDiffer>
    <experiments>3</experiments>
</comment>
<comment type="interaction">
    <interactant intactId="EBI-6166686">
        <id>Q96F15</id>
    </interactant>
    <interactant intactId="EBI-3906571">
        <id>P20138</id>
        <label>CD33</label>
    </interactant>
    <organismsDiffer>false</organismsDiffer>
    <experiments>3</experiments>
</comment>
<comment type="interaction">
    <interactant intactId="EBI-6166686">
        <id>Q96F15</id>
    </interactant>
    <interactant intactId="EBI-6657396">
        <id>P19397</id>
        <label>CD53</label>
    </interactant>
    <organismsDiffer>false</organismsDiffer>
    <experiments>3</experiments>
</comment>
<comment type="interaction">
    <interactant intactId="EBI-6166686">
        <id>Q96F15</id>
    </interactant>
    <interactant intactId="EBI-740744">
        <id>O95471</id>
        <label>CLDN7</label>
    </interactant>
    <organismsDiffer>false</organismsDiffer>
    <experiments>3</experiments>
</comment>
<comment type="interaction">
    <interactant intactId="EBI-6166686">
        <id>Q96F15</id>
    </interactant>
    <interactant intactId="EBI-6942903">
        <id>Q96BA8</id>
        <label>CREB3L1</label>
    </interactant>
    <organismsDiffer>false</organismsDiffer>
    <experiments>3</experiments>
</comment>
<comment type="interaction">
    <interactant intactId="EBI-6166686">
        <id>Q96F15</id>
    </interactant>
    <interactant intactId="EBI-8646596">
        <id>P49447</id>
        <label>CYB561</label>
    </interactant>
    <organismsDiffer>false</organismsDiffer>
    <experiments>3</experiments>
</comment>
<comment type="interaction">
    <interactant intactId="EBI-6166686">
        <id>Q96F15</id>
    </interactant>
    <interactant intactId="EBI-8637742">
        <id>Q53TN4</id>
        <label>CYBRD1</label>
    </interactant>
    <organismsDiffer>false</organismsDiffer>
    <experiments>3</experiments>
</comment>
<comment type="interaction">
    <interactant intactId="EBI-6166686">
        <id>Q96F15</id>
    </interactant>
    <interactant intactId="EBI-18030204">
        <id>Q9UBT3</id>
        <label>DKK4</label>
    </interactant>
    <organismsDiffer>false</organismsDiffer>
    <experiments>3</experiments>
</comment>
<comment type="interaction">
    <interactant intactId="EBI-6166686">
        <id>Q96F15</id>
    </interactant>
    <interactant intactId="EBI-3915253">
        <id>Q15125</id>
        <label>EBP</label>
    </interactant>
    <organismsDiffer>false</organismsDiffer>
    <experiments>3</experiments>
</comment>
<comment type="interaction">
    <interactant intactId="EBI-6166686">
        <id>Q96F15</id>
    </interactant>
    <interactant intactId="EBI-529425">
        <id>Q92838</id>
        <label>EDA</label>
    </interactant>
    <organismsDiffer>false</organismsDiffer>
    <experiments>6</experiments>
</comment>
<comment type="interaction">
    <interactant intactId="EBI-6166686">
        <id>Q96F15</id>
    </interactant>
    <interactant intactId="EBI-526033">
        <id>Q9HAV5</id>
        <label>EDA2R</label>
    </interactant>
    <organismsDiffer>false</organismsDiffer>
    <experiments>3</experiments>
</comment>
<comment type="interaction">
    <interactant intactId="EBI-6166686">
        <id>Q96F15</id>
    </interactant>
    <interactant intactId="EBI-18535450">
        <id>Q9GZR5</id>
        <label>ELOVL4</label>
    </interactant>
    <organismsDiffer>false</organismsDiffer>
    <experiments>3</experiments>
</comment>
<comment type="interaction">
    <interactant intactId="EBI-6166686">
        <id>Q96F15</id>
    </interactant>
    <interactant intactId="EBI-4319440">
        <id>P54849</id>
        <label>EMP1</label>
    </interactant>
    <organismsDiffer>false</organismsDiffer>
    <experiments>3</experiments>
</comment>
<comment type="interaction">
    <interactant intactId="EBI-6166686">
        <id>Q96F15</id>
    </interactant>
    <interactant intactId="EBI-781551">
        <id>Q9Y282</id>
        <label>ERGIC3</label>
    </interactant>
    <organismsDiffer>false</organismsDiffer>
    <experiments>3</experiments>
</comment>
<comment type="interaction">
    <interactant intactId="EBI-6166686">
        <id>Q96F15</id>
    </interactant>
    <interactant intactId="EBI-17640610">
        <id>P34910-2</id>
        <label>EVI2B</label>
    </interactant>
    <organismsDiffer>false</organismsDiffer>
    <experiments>3</experiments>
</comment>
<comment type="interaction">
    <interactant intactId="EBI-6166686">
        <id>Q96F15</id>
    </interactant>
    <interactant intactId="EBI-18636064">
        <id>Q8TBP5</id>
        <label>FAM174A</label>
    </interactant>
    <organismsDiffer>false</organismsDiffer>
    <experiments>3</experiments>
</comment>
<comment type="interaction">
    <interactant intactId="EBI-6166686">
        <id>Q96F15</id>
    </interactant>
    <interactant intactId="EBI-18938272">
        <id>Q96KR6</id>
        <label>FAM210B</label>
    </interactant>
    <organismsDiffer>false</organismsDiffer>
    <experiments>3</experiments>
</comment>
<comment type="interaction">
    <interactant intactId="EBI-6166686">
        <id>Q96F15</id>
    </interactant>
    <interactant intactId="EBI-743099">
        <id>Q969F0</id>
        <label>FATE1</label>
    </interactant>
    <organismsDiffer>false</organismsDiffer>
    <experiments>3</experiments>
</comment>
<comment type="interaction">
    <interactant intactId="EBI-6166686">
        <id>Q96F15</id>
    </interactant>
    <interactant intactId="EBI-17458373">
        <id>P48165</id>
        <label>GJA8</label>
    </interactant>
    <organismsDiffer>false</organismsDiffer>
    <experiments>3</experiments>
</comment>
<comment type="interaction">
    <interactant intactId="EBI-6166686">
        <id>Q96F15</id>
    </interactant>
    <interactant intactId="EBI-3908586">
        <id>O75712</id>
        <label>GJB3</label>
    </interactant>
    <organismsDiffer>false</organismsDiffer>
    <experiments>3</experiments>
</comment>
<comment type="interaction">
    <interactant intactId="EBI-6166686">
        <id>Q96F15</id>
    </interactant>
    <interactant intactId="EBI-3917143">
        <id>Q5T7V8</id>
        <label>GORAB</label>
    </interactant>
    <organismsDiffer>false</organismsDiffer>
    <experiments>3</experiments>
</comment>
<comment type="interaction">
    <interactant intactId="EBI-6166686">
        <id>Q96F15</id>
    </interactant>
    <interactant intactId="EBI-2832937">
        <id>Q96HH9</id>
        <label>GRAMD2B</label>
    </interactant>
    <organismsDiffer>false</organismsDiffer>
    <experiments>3</experiments>
</comment>
<comment type="interaction">
    <interactant intactId="EBI-6166686">
        <id>Q96F15</id>
    </interactant>
    <interactant intactId="EBI-3905457">
        <id>P38484</id>
        <label>IFNGR2</label>
    </interactant>
    <organismsDiffer>false</organismsDiffer>
    <experiments>3</experiments>
</comment>
<comment type="interaction">
    <interactant intactId="EBI-6166686">
        <id>Q96F15</id>
    </interactant>
    <interactant intactId="EBI-10266796">
        <id>Q8N5M9</id>
        <label>JAGN1</label>
    </interactant>
    <organismsDiffer>false</organismsDiffer>
    <experiments>3</experiments>
</comment>
<comment type="interaction">
    <interactant intactId="EBI-6166686">
        <id>Q96F15</id>
    </interactant>
    <interactant intactId="EBI-749265">
        <id>Q8N6L0</id>
        <label>KASH5</label>
    </interactant>
    <organismsDiffer>false</organismsDiffer>
    <experiments>3</experiments>
</comment>
<comment type="interaction">
    <interactant intactId="EBI-6166686">
        <id>Q96F15</id>
    </interactant>
    <interactant intactId="EBI-17272405">
        <id>Q8N743</id>
        <label>KIR3DL3</label>
    </interactant>
    <organismsDiffer>false</organismsDiffer>
    <experiments>3</experiments>
</comment>
<comment type="interaction">
    <interactant intactId="EBI-6166686">
        <id>Q96F15</id>
    </interactant>
    <interactant intactId="EBI-19944128">
        <id>Q6UX15-2</id>
        <label>LAYN</label>
    </interactant>
    <organismsDiffer>false</organismsDiffer>
    <experiments>3</experiments>
</comment>
<comment type="interaction">
    <interactant intactId="EBI-6166686">
        <id>Q96F15</id>
    </interactant>
    <interactant intactId="EBI-10173166">
        <id>Q5T700</id>
        <label>LDLRAD1</label>
    </interactant>
    <organismsDiffer>false</organismsDiffer>
    <experiments>6</experiments>
</comment>
<comment type="interaction">
    <interactant intactId="EBI-6166686">
        <id>Q96F15</id>
    </interactant>
    <interactant intactId="EBI-10264855">
        <id>Q8N112</id>
        <label>LSMEM2</label>
    </interactant>
    <organismsDiffer>false</organismsDiffer>
    <experiments>6</experiments>
</comment>
<comment type="interaction">
    <interactant intactId="EBI-6166686">
        <id>Q96F15</id>
    </interactant>
    <interactant intactId="EBI-2907262">
        <id>P20645</id>
        <label>M6PR</label>
    </interactant>
    <organismsDiffer>false</organismsDiffer>
    <experiments>3</experiments>
</comment>
<comment type="interaction">
    <interactant intactId="EBI-6166686">
        <id>Q96F15</id>
    </interactant>
    <interactant intactId="EBI-11324706">
        <id>Q99735</id>
        <label>MGST2</label>
    </interactant>
    <organismsDiffer>false</organismsDiffer>
    <experiments>3</experiments>
</comment>
<comment type="interaction">
    <interactant intactId="EBI-6166686">
        <id>Q96F15</id>
    </interactant>
    <interactant intactId="EBI-724754">
        <id>O14880</id>
        <label>MGST3</label>
    </interactant>
    <organismsDiffer>false</organismsDiffer>
    <experiments>3</experiments>
</comment>
<comment type="interaction">
    <interactant intactId="EBI-6166686">
        <id>Q96F15</id>
    </interactant>
    <interactant intactId="EBI-18391669">
        <id>Q7Z6M3</id>
        <label>MILR1</label>
    </interactant>
    <organismsDiffer>false</organismsDiffer>
    <experiments>3</experiments>
</comment>
<comment type="interaction">
    <interactant intactId="EBI-6166686">
        <id>Q96F15</id>
    </interactant>
    <interactant intactId="EBI-12839612">
        <id>Q96JA4</id>
        <label>MS4A14</label>
    </interactant>
    <organismsDiffer>false</organismsDiffer>
    <experiments>3</experiments>
</comment>
<comment type="interaction">
    <interactant intactId="EBI-6166686">
        <id>Q96F15</id>
    </interactant>
    <interactant intactId="EBI-716063">
        <id>Q13113</id>
        <label>PDZK1IP1</label>
    </interactant>
    <organismsDiffer>false</organismsDiffer>
    <experiments>3</experiments>
</comment>
<comment type="interaction">
    <interactant intactId="EBI-6166686">
        <id>Q96F15</id>
    </interactant>
    <interactant intactId="EBI-11161398">
        <id>O14684</id>
        <label>PTGES</label>
    </interactant>
    <organismsDiffer>false</organismsDiffer>
    <experiments>3</experiments>
</comment>
<comment type="interaction">
    <interactant intactId="EBI-6166686">
        <id>Q96F15</id>
    </interactant>
    <interactant intactId="EBI-10192441">
        <id>Q86VR2</id>
        <label>RETREG3</label>
    </interactant>
    <organismsDiffer>false</organismsDiffer>
    <experiments>5</experiments>
</comment>
<comment type="interaction">
    <interactant intactId="EBI-6166686">
        <id>Q96F15</id>
    </interactant>
    <interactant intactId="EBI-18397230">
        <id>Q6P5S7</id>
        <label>RNASEK</label>
    </interactant>
    <organismsDiffer>false</organismsDiffer>
    <experiments>3</experiments>
</comment>
<comment type="interaction">
    <interactant intactId="EBI-6166686">
        <id>Q96F15</id>
    </interactant>
    <interactant intactId="EBI-2466594">
        <id>Q6ZMZ0</id>
        <label>RNF19B</label>
    </interactant>
    <organismsDiffer>false</organismsDiffer>
    <experiments>3</experiments>
</comment>
<comment type="interaction">
    <interactant intactId="EBI-6166686">
        <id>Q96F15</id>
    </interactant>
    <interactant intactId="EBI-17247926">
        <id>Q9NY72</id>
        <label>SCN3B</label>
    </interactant>
    <organismsDiffer>false</organismsDiffer>
    <experiments>3</experiments>
</comment>
<comment type="interaction">
    <interactant intactId="EBI-6166686">
        <id>Q96F15</id>
    </interactant>
    <interactant intactId="EBI-18037857">
        <id>Q3SXP7</id>
        <label>SHISAL1</label>
    </interactant>
    <organismsDiffer>false</organismsDiffer>
    <experiments>3</experiments>
</comment>
<comment type="interaction">
    <interactant intactId="EBI-6166686">
        <id>Q96F15</id>
    </interactant>
    <interactant intactId="EBI-3923031">
        <id>Q14973</id>
        <label>SLC10A1</label>
    </interactant>
    <organismsDiffer>false</organismsDiffer>
    <experiments>3</experiments>
</comment>
<comment type="interaction">
    <interactant intactId="EBI-6166686">
        <id>Q96F15</id>
    </interactant>
    <interactant intactId="EBI-17295964">
        <id>Q9NQQ7-3</id>
        <label>SLC35C2</label>
    </interactant>
    <organismsDiffer>false</organismsDiffer>
    <experiments>3</experiments>
</comment>
<comment type="interaction">
    <interactant intactId="EBI-6166686">
        <id>Q96F15</id>
    </interactant>
    <interactant intactId="EBI-741850">
        <id>Q9BZL3</id>
        <label>SMIM3</label>
    </interactant>
    <organismsDiffer>false</organismsDiffer>
    <experiments>3</experiments>
</comment>
<comment type="interaction">
    <interactant intactId="EBI-6166686">
        <id>Q96F15</id>
    </interactant>
    <interactant intactId="EBI-17498703">
        <id>Q9HBV2</id>
        <label>SPACA1</label>
    </interactant>
    <organismsDiffer>false</organismsDiffer>
    <experiments>3</experiments>
</comment>
<comment type="interaction">
    <interactant intactId="EBI-6166686">
        <id>Q96F15</id>
    </interactant>
    <interactant intactId="EBI-1211440">
        <id>P27105</id>
        <label>STOM</label>
    </interactant>
    <organismsDiffer>false</organismsDiffer>
    <experiments>3</experiments>
</comment>
<comment type="interaction">
    <interactant intactId="EBI-6166686">
        <id>Q96F15</id>
    </interactant>
    <interactant intactId="EBI-712466">
        <id>Q16623</id>
        <label>STX1A</label>
    </interactant>
    <organismsDiffer>false</organismsDiffer>
    <experiments>3</experiments>
</comment>
<comment type="interaction">
    <interactant intactId="EBI-6166686">
        <id>Q96F15</id>
    </interactant>
    <interactant intactId="EBI-11956649">
        <id>P32856-2</id>
        <label>STX2</label>
    </interactant>
    <organismsDiffer>false</organismsDiffer>
    <experiments>3</experiments>
</comment>
<comment type="interaction">
    <interactant intactId="EBI-6166686">
        <id>Q96F15</id>
    </interactant>
    <interactant intactId="EBI-744942">
        <id>Q12846</id>
        <label>STX4</label>
    </interactant>
    <organismsDiffer>false</organismsDiffer>
    <experiments>3</experiments>
</comment>
<comment type="interaction">
    <interactant intactId="EBI-6166686">
        <id>Q96F15</id>
    </interactant>
    <interactant intactId="EBI-524909">
        <id>P21579</id>
        <label>SYT1</label>
    </interactant>
    <organismsDiffer>false</organismsDiffer>
    <experiments>3</experiments>
</comment>
<comment type="interaction">
    <interactant intactId="EBI-6166686">
        <id>Q96F15</id>
    </interactant>
    <interactant intactId="EBI-13351685">
        <id>Q96CE8</id>
        <label>TM4SF18</label>
    </interactant>
    <organismsDiffer>false</organismsDiffer>
    <experiments>3</experiments>
</comment>
<comment type="interaction">
    <interactant intactId="EBI-6166686">
        <id>Q96F15</id>
    </interactant>
    <interactant intactId="EBI-6448756">
        <id>Q96DZ7</id>
        <label>TM4SF19</label>
    </interactant>
    <organismsDiffer>false</organismsDiffer>
    <experiments>3</experiments>
</comment>
<comment type="interaction">
    <interactant intactId="EBI-6166686">
        <id>Q96F15</id>
    </interactant>
    <interactant intactId="EBI-1051115">
        <id>Q9H3N1</id>
        <label>TMX1</label>
    </interactant>
    <organismsDiffer>false</organismsDiffer>
    <experiments>3</experiments>
</comment>
<comment type="interaction">
    <interactant intactId="EBI-6166686">
        <id>Q96F15</id>
    </interactant>
    <interactant intactId="EBI-6447886">
        <id>Q9Y320</id>
        <label>TMX2</label>
    </interactant>
    <organismsDiffer>false</organismsDiffer>
    <experiments>3</experiments>
</comment>
<comment type="interaction">
    <interactant intactId="EBI-6166686">
        <id>Q96F15</id>
    </interactant>
    <interactant intactId="EBI-12089038">
        <id>Q9NS68-2</id>
        <label>TNFRSF19</label>
    </interactant>
    <organismsDiffer>false</organismsDiffer>
    <experiments>3</experiments>
</comment>
<comment type="interaction">
    <interactant intactId="EBI-6166686">
        <id>Q96F15</id>
    </interactant>
    <interactant intactId="EBI-17670824">
        <id>Q8WUV1</id>
        <label>TSPAN18</label>
    </interactant>
    <organismsDiffer>false</organismsDiffer>
    <experiments>3</experiments>
</comment>
<comment type="interaction">
    <interactant intactId="EBI-6166686">
        <id>Q96F15</id>
    </interactant>
    <interactant intactId="EBI-3892947">
        <id>Q5T4F4</id>
        <label>ZFYVE27</label>
    </interactant>
    <organismsDiffer>false</organismsDiffer>
    <experiments>3</experiments>
</comment>
<comment type="subcellular location">
    <subcellularLocation>
        <location evidence="10 11">Lysosome membrane</location>
        <topology evidence="15">Single-pass type IV membrane protein</topology>
    </subcellularLocation>
    <subcellularLocation>
        <location evidence="10">Endosome</location>
        <location evidence="10">Multivesicular body membrane</location>
        <topology evidence="15">Single-pass type IV membrane protein</topology>
    </subcellularLocation>
    <subcellularLocation>
        <location evidence="2">Endosome membrane</location>
        <topology evidence="2">Single-pass type IV membrane protein</topology>
    </subcellularLocation>
    <text evidence="16 17">The mitochondrial localization originally reported was observed with C-terminally tagged protein and was not confirmed in later publications.</text>
</comment>
<comment type="alternative products">
    <event type="alternative splicing"/>
    <isoform>
        <id>Q96F15-1</id>
        <name>1</name>
        <sequence type="displayed"/>
    </isoform>
    <isoform>
        <id>Q96F15-2</id>
        <name>2</name>
        <sequence type="described" ref="VSP_008961"/>
    </isoform>
</comment>
<comment type="tissue specificity">
    <text evidence="8 11">Widely expressed with high levels in lymph node and spleen (PubMed:14724691). High expression found in T lymphocytes, including CD4 and CD8-positive T-cells, and monocytes (PubMed:14724691, PubMed:29382851). Very low expression levels in B-lymphocytes (PubMed:14724691).</text>
</comment>
<comment type="disease" evidence="12">
    <disease id="DI-06180">
        <name>Portal hypertension, non-cirrhotic, 2</name>
        <acronym>NCPH2</acronym>
        <description>An autosomal recessive disorder characterized by portal hypertension associated with hepatosplenomegaly, in absence of cirrhosis. Portal hypertension is defined by a portal venous system pressure that is at least 5 mm Hg higher than the pressure in the inferior vena cava. High pressure in the portal venous system leads to shunting of blood through vessels that are poorly suited to carrying large blood volumes, resulting in collateral circulation and splenomegaly. NCPH2 patients have jaundice, hyperbilirubinemia, pancytopenia, including neutropenia, lymphopenia, and thrombocytopenia, hepatosplenomegaly, and esophageal varices. Some patients may have recurrent infections or features suggestive of an immunodeficiency.</description>
        <dbReference type="MIM" id="619463"/>
    </disease>
    <text>The disease may be caused by variants affecting the gene represented in this entry.</text>
</comment>
<comment type="similarity">
    <text evidence="15">Belongs to the TRAFAC class TrmE-Era-EngA-EngB-Septin-like GTPase superfamily. AIG1/Toc34/Toc159-like paraseptin GTPase family. IAN subfamily.</text>
</comment>
<organism>
    <name type="scientific">Homo sapiens</name>
    <name type="common">Human</name>
    <dbReference type="NCBI Taxonomy" id="9606"/>
    <lineage>
        <taxon>Eukaryota</taxon>
        <taxon>Metazoa</taxon>
        <taxon>Chordata</taxon>
        <taxon>Craniata</taxon>
        <taxon>Vertebrata</taxon>
        <taxon>Euteleostomi</taxon>
        <taxon>Mammalia</taxon>
        <taxon>Eutheria</taxon>
        <taxon>Euarchontoglires</taxon>
        <taxon>Primates</taxon>
        <taxon>Haplorrhini</taxon>
        <taxon>Catarrhini</taxon>
        <taxon>Hominidae</taxon>
        <taxon>Homo</taxon>
    </lineage>
</organism>
<proteinExistence type="evidence at protein level"/>
<keyword id="KW-0002">3D-structure</keyword>
<keyword id="KW-0025">Alternative splicing</keyword>
<keyword id="KW-0967">Endosome</keyword>
<keyword id="KW-0342">GTP-binding</keyword>
<keyword id="KW-0458">Lysosome</keyword>
<keyword id="KW-0472">Membrane</keyword>
<keyword id="KW-0547">Nucleotide-binding</keyword>
<keyword id="KW-1267">Proteomics identification</keyword>
<keyword id="KW-1185">Reference proteome</keyword>
<keyword id="KW-0812">Transmembrane</keyword>
<keyword id="KW-1133">Transmembrane helix</keyword>
<accession>Q96F15</accession>
<accession>D3DWZ5</accession>
<accession>Q6IA75</accession>
<accession>Q96NE4</accession>
<accession>Q9NUK9</accession>
<protein>
    <recommendedName>
        <fullName>GTPase IMAP family member 5</fullName>
    </recommendedName>
    <alternativeName>
        <fullName>Immune-associated nucleotide-binding protein 5</fullName>
    </alternativeName>
    <alternativeName>
        <fullName>Immunity-associated nucleotide 4-like 1 protein</fullName>
    </alternativeName>
    <alternativeName>
        <fullName>Immunity-associated nucleotide 5 protein</fullName>
        <shortName>IAN-5</shortName>
        <shortName evidence="14">hIAN5</shortName>
    </alternativeName>
    <alternativeName>
        <fullName>Immunity-associated protein 3</fullName>
    </alternativeName>
</protein>